<feature type="chain" id="PRO_0000337348" description="Elongation factor Tu">
    <location>
        <begin position="1"/>
        <end position="396"/>
    </location>
</feature>
<feature type="domain" description="tr-type G">
    <location>
        <begin position="10"/>
        <end position="206"/>
    </location>
</feature>
<feature type="region of interest" description="G1" evidence="1">
    <location>
        <begin position="19"/>
        <end position="26"/>
    </location>
</feature>
<feature type="region of interest" description="G2" evidence="1">
    <location>
        <begin position="60"/>
        <end position="64"/>
    </location>
</feature>
<feature type="region of interest" description="G3" evidence="1">
    <location>
        <begin position="81"/>
        <end position="84"/>
    </location>
</feature>
<feature type="region of interest" description="G4" evidence="1">
    <location>
        <begin position="136"/>
        <end position="139"/>
    </location>
</feature>
<feature type="region of interest" description="G5" evidence="1">
    <location>
        <begin position="174"/>
        <end position="176"/>
    </location>
</feature>
<feature type="binding site" evidence="2">
    <location>
        <begin position="19"/>
        <end position="26"/>
    </location>
    <ligand>
        <name>GTP</name>
        <dbReference type="ChEBI" id="CHEBI:37565"/>
    </ligand>
</feature>
<feature type="binding site" evidence="2">
    <location>
        <position position="26"/>
    </location>
    <ligand>
        <name>Mg(2+)</name>
        <dbReference type="ChEBI" id="CHEBI:18420"/>
    </ligand>
</feature>
<feature type="binding site" evidence="2">
    <location>
        <begin position="81"/>
        <end position="85"/>
    </location>
    <ligand>
        <name>GTP</name>
        <dbReference type="ChEBI" id="CHEBI:37565"/>
    </ligand>
</feature>
<feature type="binding site" evidence="2">
    <location>
        <begin position="136"/>
        <end position="139"/>
    </location>
    <ligand>
        <name>GTP</name>
        <dbReference type="ChEBI" id="CHEBI:37565"/>
    </ligand>
</feature>
<reference key="1">
    <citation type="journal article" date="2006" name="Proc. Natl. Acad. Sci. U.S.A.">
        <title>Burkholderia xenovorans LB400 harbors a multi-replicon, 9.73-Mbp genome shaped for versatility.</title>
        <authorList>
            <person name="Chain P.S.G."/>
            <person name="Denef V.J."/>
            <person name="Konstantinidis K.T."/>
            <person name="Vergez L.M."/>
            <person name="Agullo L."/>
            <person name="Reyes V.L."/>
            <person name="Hauser L."/>
            <person name="Cordova M."/>
            <person name="Gomez L."/>
            <person name="Gonzalez M."/>
            <person name="Land M."/>
            <person name="Lao V."/>
            <person name="Larimer F."/>
            <person name="LiPuma J.J."/>
            <person name="Mahenthiralingam E."/>
            <person name="Malfatti S.A."/>
            <person name="Marx C.J."/>
            <person name="Parnell J.J."/>
            <person name="Ramette A."/>
            <person name="Richardson P."/>
            <person name="Seeger M."/>
            <person name="Smith D."/>
            <person name="Spilker T."/>
            <person name="Sul W.J."/>
            <person name="Tsoi T.V."/>
            <person name="Ulrich L.E."/>
            <person name="Zhulin I.B."/>
            <person name="Tiedje J.M."/>
        </authorList>
    </citation>
    <scope>NUCLEOTIDE SEQUENCE [LARGE SCALE GENOMIC DNA]</scope>
    <source>
        <strain>LB400</strain>
    </source>
</reference>
<sequence length="396" mass="43058">MAKGKFERTKPHVNVGTIGHVDHGKTTLTAAITTVLTQKFGGEAKAYDQIDAAPEEKARGITINTAHVEYETANRHYAHVDCPGHADYVKNMITGAAQMDGAILVCSAADGPMPQTREHILLARQVGVPYIIVFLNKCDMVDDAELLELVEMEVRELLSKYDFPGDETPIIKGSAKLALEGDKGELGEVAIMNLADALDTYIPTPERAVDGAFLMPVEDVFSISGRGTVVTGRVERGVVKVGEEIEIVGIKPTVKTTCTGVEMFRKLLDQGQAGDNVGILLRGTKREDVERGQVLAKPGSINPHTHFTAEVYVLSKDEGGRHTPFFNNYRPQFYFRTTDVTGSIELPKDKEMVMPGDNVSITVKLINPIAMEEGLRFAIREGGRTVGAGVVAKILE</sequence>
<name>EFTU_PARXL</name>
<dbReference type="EC" id="3.6.5.3" evidence="2"/>
<dbReference type="EMBL" id="CP000270">
    <property type="protein sequence ID" value="ABE32621.1"/>
    <property type="molecule type" value="Genomic_DNA"/>
</dbReference>
<dbReference type="EMBL" id="CP000270">
    <property type="protein sequence ID" value="ABE32634.1"/>
    <property type="molecule type" value="Genomic_DNA"/>
</dbReference>
<dbReference type="SMR" id="Q13TF5"/>
<dbReference type="STRING" id="266265.Bxe_A0299"/>
<dbReference type="KEGG" id="bxb:DR64_2468"/>
<dbReference type="KEGG" id="bxb:DR64_2482"/>
<dbReference type="KEGG" id="bxe:Bxe_A0299"/>
<dbReference type="KEGG" id="bxe:Bxe_A0312"/>
<dbReference type="eggNOG" id="COG0050">
    <property type="taxonomic scope" value="Bacteria"/>
</dbReference>
<dbReference type="OrthoDB" id="9803139at2"/>
<dbReference type="Proteomes" id="UP000001817">
    <property type="component" value="Chromosome 1"/>
</dbReference>
<dbReference type="GO" id="GO:0005829">
    <property type="term" value="C:cytosol"/>
    <property type="evidence" value="ECO:0007669"/>
    <property type="project" value="TreeGrafter"/>
</dbReference>
<dbReference type="GO" id="GO:0005525">
    <property type="term" value="F:GTP binding"/>
    <property type="evidence" value="ECO:0007669"/>
    <property type="project" value="UniProtKB-UniRule"/>
</dbReference>
<dbReference type="GO" id="GO:0003924">
    <property type="term" value="F:GTPase activity"/>
    <property type="evidence" value="ECO:0007669"/>
    <property type="project" value="InterPro"/>
</dbReference>
<dbReference type="GO" id="GO:0097216">
    <property type="term" value="F:guanosine tetraphosphate binding"/>
    <property type="evidence" value="ECO:0007669"/>
    <property type="project" value="UniProtKB-ARBA"/>
</dbReference>
<dbReference type="GO" id="GO:0003746">
    <property type="term" value="F:translation elongation factor activity"/>
    <property type="evidence" value="ECO:0007669"/>
    <property type="project" value="UniProtKB-UniRule"/>
</dbReference>
<dbReference type="CDD" id="cd01884">
    <property type="entry name" value="EF_Tu"/>
    <property type="match status" value="1"/>
</dbReference>
<dbReference type="CDD" id="cd03697">
    <property type="entry name" value="EFTU_II"/>
    <property type="match status" value="1"/>
</dbReference>
<dbReference type="CDD" id="cd03707">
    <property type="entry name" value="EFTU_III"/>
    <property type="match status" value="1"/>
</dbReference>
<dbReference type="FunFam" id="2.40.30.10:FF:000001">
    <property type="entry name" value="Elongation factor Tu"/>
    <property type="match status" value="1"/>
</dbReference>
<dbReference type="FunFam" id="3.40.50.300:FF:000003">
    <property type="entry name" value="Elongation factor Tu"/>
    <property type="match status" value="1"/>
</dbReference>
<dbReference type="Gene3D" id="3.40.50.300">
    <property type="entry name" value="P-loop containing nucleotide triphosphate hydrolases"/>
    <property type="match status" value="1"/>
</dbReference>
<dbReference type="Gene3D" id="2.40.30.10">
    <property type="entry name" value="Translation factors"/>
    <property type="match status" value="2"/>
</dbReference>
<dbReference type="HAMAP" id="MF_00118_B">
    <property type="entry name" value="EF_Tu_B"/>
    <property type="match status" value="1"/>
</dbReference>
<dbReference type="InterPro" id="IPR041709">
    <property type="entry name" value="EF-Tu_GTP-bd"/>
</dbReference>
<dbReference type="InterPro" id="IPR050055">
    <property type="entry name" value="EF-Tu_GTPase"/>
</dbReference>
<dbReference type="InterPro" id="IPR004161">
    <property type="entry name" value="EFTu-like_2"/>
</dbReference>
<dbReference type="InterPro" id="IPR033720">
    <property type="entry name" value="EFTU_2"/>
</dbReference>
<dbReference type="InterPro" id="IPR031157">
    <property type="entry name" value="G_TR_CS"/>
</dbReference>
<dbReference type="InterPro" id="IPR027417">
    <property type="entry name" value="P-loop_NTPase"/>
</dbReference>
<dbReference type="InterPro" id="IPR005225">
    <property type="entry name" value="Small_GTP-bd"/>
</dbReference>
<dbReference type="InterPro" id="IPR000795">
    <property type="entry name" value="T_Tr_GTP-bd_dom"/>
</dbReference>
<dbReference type="InterPro" id="IPR009000">
    <property type="entry name" value="Transl_B-barrel_sf"/>
</dbReference>
<dbReference type="InterPro" id="IPR009001">
    <property type="entry name" value="Transl_elong_EF1A/Init_IF2_C"/>
</dbReference>
<dbReference type="InterPro" id="IPR004541">
    <property type="entry name" value="Transl_elong_EFTu/EF1A_bac/org"/>
</dbReference>
<dbReference type="InterPro" id="IPR004160">
    <property type="entry name" value="Transl_elong_EFTu/EF1A_C"/>
</dbReference>
<dbReference type="NCBIfam" id="TIGR00485">
    <property type="entry name" value="EF-Tu"/>
    <property type="match status" value="1"/>
</dbReference>
<dbReference type="NCBIfam" id="NF000766">
    <property type="entry name" value="PRK00049.1"/>
    <property type="match status" value="1"/>
</dbReference>
<dbReference type="NCBIfam" id="NF009372">
    <property type="entry name" value="PRK12735.1"/>
    <property type="match status" value="1"/>
</dbReference>
<dbReference type="NCBIfam" id="NF009373">
    <property type="entry name" value="PRK12736.1"/>
    <property type="match status" value="1"/>
</dbReference>
<dbReference type="NCBIfam" id="TIGR00231">
    <property type="entry name" value="small_GTP"/>
    <property type="match status" value="1"/>
</dbReference>
<dbReference type="PANTHER" id="PTHR43721:SF22">
    <property type="entry name" value="ELONGATION FACTOR TU, MITOCHONDRIAL"/>
    <property type="match status" value="1"/>
</dbReference>
<dbReference type="PANTHER" id="PTHR43721">
    <property type="entry name" value="ELONGATION FACTOR TU-RELATED"/>
    <property type="match status" value="1"/>
</dbReference>
<dbReference type="Pfam" id="PF00009">
    <property type="entry name" value="GTP_EFTU"/>
    <property type="match status" value="1"/>
</dbReference>
<dbReference type="Pfam" id="PF03144">
    <property type="entry name" value="GTP_EFTU_D2"/>
    <property type="match status" value="1"/>
</dbReference>
<dbReference type="Pfam" id="PF03143">
    <property type="entry name" value="GTP_EFTU_D3"/>
    <property type="match status" value="1"/>
</dbReference>
<dbReference type="PRINTS" id="PR00315">
    <property type="entry name" value="ELONGATNFCT"/>
</dbReference>
<dbReference type="SUPFAM" id="SSF50465">
    <property type="entry name" value="EF-Tu/eEF-1alpha/eIF2-gamma C-terminal domain"/>
    <property type="match status" value="1"/>
</dbReference>
<dbReference type="SUPFAM" id="SSF52540">
    <property type="entry name" value="P-loop containing nucleoside triphosphate hydrolases"/>
    <property type="match status" value="1"/>
</dbReference>
<dbReference type="SUPFAM" id="SSF50447">
    <property type="entry name" value="Translation proteins"/>
    <property type="match status" value="1"/>
</dbReference>
<dbReference type="PROSITE" id="PS00301">
    <property type="entry name" value="G_TR_1"/>
    <property type="match status" value="1"/>
</dbReference>
<dbReference type="PROSITE" id="PS51722">
    <property type="entry name" value="G_TR_2"/>
    <property type="match status" value="1"/>
</dbReference>
<keyword id="KW-0963">Cytoplasm</keyword>
<keyword id="KW-0251">Elongation factor</keyword>
<keyword id="KW-0342">GTP-binding</keyword>
<keyword id="KW-0378">Hydrolase</keyword>
<keyword id="KW-0460">Magnesium</keyword>
<keyword id="KW-0479">Metal-binding</keyword>
<keyword id="KW-0547">Nucleotide-binding</keyword>
<keyword id="KW-0648">Protein biosynthesis</keyword>
<keyword id="KW-1185">Reference proteome</keyword>
<proteinExistence type="inferred from homology"/>
<comment type="function">
    <text evidence="2">GTP hydrolase that promotes the GTP-dependent binding of aminoacyl-tRNA to the A-site of ribosomes during protein biosynthesis.</text>
</comment>
<comment type="catalytic activity">
    <reaction evidence="2">
        <text>GTP + H2O = GDP + phosphate + H(+)</text>
        <dbReference type="Rhea" id="RHEA:19669"/>
        <dbReference type="ChEBI" id="CHEBI:15377"/>
        <dbReference type="ChEBI" id="CHEBI:15378"/>
        <dbReference type="ChEBI" id="CHEBI:37565"/>
        <dbReference type="ChEBI" id="CHEBI:43474"/>
        <dbReference type="ChEBI" id="CHEBI:58189"/>
        <dbReference type="EC" id="3.6.5.3"/>
    </reaction>
    <physiologicalReaction direction="left-to-right" evidence="2">
        <dbReference type="Rhea" id="RHEA:19670"/>
    </physiologicalReaction>
</comment>
<comment type="subunit">
    <text evidence="2">Monomer.</text>
</comment>
<comment type="subcellular location">
    <subcellularLocation>
        <location evidence="2">Cytoplasm</location>
    </subcellularLocation>
</comment>
<comment type="similarity">
    <text evidence="2">Belongs to the TRAFAC class translation factor GTPase superfamily. Classic translation factor GTPase family. EF-Tu/EF-1A subfamily.</text>
</comment>
<accession>Q13TF5</accession>
<gene>
    <name evidence="2" type="primary">tuf1</name>
    <name type="ordered locus">Bxeno_A4083</name>
</gene>
<gene>
    <name evidence="2" type="primary">tuf2</name>
    <name type="ordered locus">Bxeno_A4096</name>
    <name type="ORF">Bxe_A0299</name>
    <name type="ORF">Bxe_A0312</name>
</gene>
<evidence type="ECO:0000250" key="1"/>
<evidence type="ECO:0000255" key="2">
    <source>
        <dbReference type="HAMAP-Rule" id="MF_00118"/>
    </source>
</evidence>
<organism>
    <name type="scientific">Paraburkholderia xenovorans (strain LB400)</name>
    <dbReference type="NCBI Taxonomy" id="266265"/>
    <lineage>
        <taxon>Bacteria</taxon>
        <taxon>Pseudomonadati</taxon>
        <taxon>Pseudomonadota</taxon>
        <taxon>Betaproteobacteria</taxon>
        <taxon>Burkholderiales</taxon>
        <taxon>Burkholderiaceae</taxon>
        <taxon>Paraburkholderia</taxon>
    </lineage>
</organism>
<protein>
    <recommendedName>
        <fullName evidence="2">Elongation factor Tu</fullName>
        <shortName evidence="2">EF-Tu</shortName>
        <ecNumber evidence="2">3.6.5.3</ecNumber>
    </recommendedName>
</protein>